<accession>P17781</accession>
<organismHost>
    <name type="scientific">Brassica campestris</name>
    <name type="common">Field mustard</name>
    <dbReference type="NCBI Taxonomy" id="3711"/>
</organismHost>
<organismHost>
    <name type="scientific">Solanum tuberosum</name>
    <name type="common">Potato</name>
    <dbReference type="NCBI Taxonomy" id="4113"/>
</organismHost>
<sequence length="70" mass="7595">MEVNTYLNAIILVLVVTIIAVISTSLVRTEPCVIKITGESITVLACKLDAETIKAIADLKPLSVERLSFH</sequence>
<evidence type="ECO:0000255" key="1"/>
<evidence type="ECO:0000269" key="2">
    <source>
    </source>
</evidence>
<evidence type="ECO:0000269" key="3">
    <source>
    </source>
</evidence>
<evidence type="ECO:0000305" key="4"/>
<gene>
    <name type="ORF">ORF4</name>
</gene>
<keyword id="KW-1038">Host endoplasmic reticulum</keyword>
<keyword id="KW-1043">Host membrane</keyword>
<keyword id="KW-0472">Membrane</keyword>
<keyword id="KW-1185">Reference proteome</keyword>
<keyword id="KW-0812">Transmembrane</keyword>
<keyword id="KW-1133">Transmembrane helix</keyword>
<keyword id="KW-0813">Transport</keyword>
<keyword id="KW-0916">Viral movement protein</keyword>
<feature type="chain" id="PRO_0000222607" description="Movement protein TGBp3">
    <location>
        <begin position="1"/>
        <end position="70"/>
    </location>
</feature>
<feature type="topological domain" description="Lumenal" evidence="1">
    <location>
        <begin position="1"/>
        <end position="4"/>
    </location>
</feature>
<feature type="transmembrane region" description="Helical" evidence="1">
    <location>
        <begin position="5"/>
        <end position="27"/>
    </location>
</feature>
<feature type="topological domain" description="Cytoplasmic" evidence="1">
    <location>
        <begin position="28"/>
        <end position="70"/>
    </location>
</feature>
<proteinExistence type="inferred from homology"/>
<dbReference type="EMBL" id="D00344">
    <property type="protein sequence ID" value="BAA00252.1"/>
    <property type="molecule type" value="Genomic_RNA"/>
</dbReference>
<dbReference type="PIR" id="JA0105">
    <property type="entry name" value="WMWGP4"/>
</dbReference>
<dbReference type="RefSeq" id="YP_002332932.1">
    <property type="nucleotide sequence ID" value="NC_011620.1"/>
</dbReference>
<dbReference type="KEGG" id="vg:7065757"/>
<dbReference type="Proteomes" id="UP000008687">
    <property type="component" value="Segment"/>
</dbReference>
<dbReference type="GO" id="GO:0044167">
    <property type="term" value="C:host cell endoplasmic reticulum membrane"/>
    <property type="evidence" value="ECO:0007669"/>
    <property type="project" value="UniProtKB-SubCell"/>
</dbReference>
<dbReference type="GO" id="GO:0016020">
    <property type="term" value="C:membrane"/>
    <property type="evidence" value="ECO:0007669"/>
    <property type="project" value="UniProtKB-KW"/>
</dbReference>
<dbReference type="GO" id="GO:0046740">
    <property type="term" value="P:transport of virus in host, cell to cell"/>
    <property type="evidence" value="ECO:0007669"/>
    <property type="project" value="UniProtKB-KW"/>
</dbReference>
<dbReference type="InterPro" id="IPR003411">
    <property type="entry name" value="TGBp3"/>
</dbReference>
<dbReference type="Pfam" id="PF02495">
    <property type="entry name" value="TGBp3"/>
    <property type="match status" value="1"/>
</dbReference>
<reference key="1">
    <citation type="journal article" date="1988" name="J. Gen. Virol.">
        <title>The complete nucleotide sequence of potato virus X and its homologies at the amino acid level with various plus-stranded RNA viruses.</title>
        <authorList>
            <person name="Huisman M.J."/>
            <person name="Linthorst H.J.M."/>
            <person name="Bol J.F."/>
            <person name="Cornelissen B.J.C."/>
        </authorList>
    </citation>
    <scope>NUCLEOTIDE SEQUENCE [GENOMIC RNA]</scope>
</reference>
<reference key="2">
    <citation type="journal article" date="2003" name="Virology">
        <title>The Potato virus X TGBp3 protein associates with the ER network for virus cell-to-cell movement.</title>
        <authorList>
            <person name="Krishnamurthy K."/>
            <person name="Heppler M."/>
            <person name="Mitra R."/>
            <person name="Blancaflor E."/>
            <person name="Payton M."/>
            <person name="Nelson R.S."/>
            <person name="Verchot-Lubicz J."/>
        </authorList>
    </citation>
    <scope>FUNCTION</scope>
</reference>
<reference key="3">
    <citation type="journal article" date="2011" name="Plant Physiol.">
        <title>The unfolded protein response is triggered by a plant viral movement protein.</title>
        <authorList>
            <person name="Ye C."/>
            <person name="Dickman M.B."/>
            <person name="Whitham S.A."/>
            <person name="Payton M."/>
            <person name="Verchot J."/>
        </authorList>
    </citation>
    <scope>FUNCTION</scope>
</reference>
<reference key="4">
    <citation type="journal article" date="2005" name="Mol. Plant Microbe Interact.">
        <title>A new cell-to-cell transport model for Potexviruses.</title>
        <authorList>
            <person name="Verchot-Lubicz J."/>
        </authorList>
    </citation>
    <scope>REVIEW</scope>
</reference>
<name>TGB3_PVXX3</name>
<comment type="function">
    <text evidence="2 3">Plays a role in viral cell-to-cell propagation, by facilitating genome transport to neighboring plant cells through plasmosdesmata. May induce the formation of granular vesicles derived from the endoplasmic reticulum, which align on actin filaments.</text>
</comment>
<comment type="subcellular location">
    <subcellularLocation>
        <location>Host endoplasmic reticulum membrane</location>
    </subcellularLocation>
</comment>
<comment type="miscellaneous">
    <text>TGBp1, TGBp2 and TGBp3 seem to act together for cell-to-cell propagation. TGBp1 is the main movement protein that physically cross the plasmodesma with the viral genome. TGBp2 and TGBp3 would facilitate TGBp1 function.</text>
</comment>
<comment type="similarity">
    <text evidence="4">Belongs to the Tymovirales TGBp3 protein family.</text>
</comment>
<organism>
    <name type="scientific">Potato virus X (strain X3)</name>
    <name type="common">PVX</name>
    <dbReference type="NCBI Taxonomy" id="12185"/>
    <lineage>
        <taxon>Viruses</taxon>
        <taxon>Riboviria</taxon>
        <taxon>Orthornavirae</taxon>
        <taxon>Kitrinoviricota</taxon>
        <taxon>Alsuviricetes</taxon>
        <taxon>Tymovirales</taxon>
        <taxon>Alphaflexiviridae</taxon>
        <taxon>Potexvirus</taxon>
        <taxon>Potato virus X</taxon>
    </lineage>
</organism>
<protein>
    <recommendedName>
        <fullName>Movement protein TGBp3</fullName>
    </recommendedName>
    <alternativeName>
        <fullName>7 kDa protein</fullName>
    </alternativeName>
    <alternativeName>
        <fullName>Triple gene block 3 protein</fullName>
        <shortName>TGBp3</shortName>
    </alternativeName>
</protein>